<evidence type="ECO:0000255" key="1">
    <source>
        <dbReference type="HAMAP-Rule" id="MF_00336"/>
    </source>
</evidence>
<keyword id="KW-0067">ATP-binding</keyword>
<keyword id="KW-0093">Biotin biosynthesis</keyword>
<keyword id="KW-0963">Cytoplasm</keyword>
<keyword id="KW-0436">Ligase</keyword>
<keyword id="KW-0460">Magnesium</keyword>
<keyword id="KW-0479">Metal-binding</keyword>
<keyword id="KW-0547">Nucleotide-binding</keyword>
<keyword id="KW-1185">Reference proteome</keyword>
<protein>
    <recommendedName>
        <fullName evidence="1">ATP-dependent dethiobiotin synthetase BioD</fullName>
        <ecNumber evidence="1">6.3.3.3</ecNumber>
    </recommendedName>
    <alternativeName>
        <fullName evidence="1">DTB synthetase</fullName>
        <shortName evidence="1">DTBS</shortName>
    </alternativeName>
    <alternativeName>
        <fullName evidence="1">Dethiobiotin synthase</fullName>
    </alternativeName>
</protein>
<accession>O66832</accession>
<dbReference type="EC" id="6.3.3.3" evidence="1"/>
<dbReference type="EMBL" id="AE000657">
    <property type="protein sequence ID" value="AAC06785.1"/>
    <property type="molecule type" value="Genomic_DNA"/>
</dbReference>
<dbReference type="PIR" id="D70350">
    <property type="entry name" value="D70350"/>
</dbReference>
<dbReference type="RefSeq" id="NP_213392.1">
    <property type="nucleotide sequence ID" value="NC_000918.1"/>
</dbReference>
<dbReference type="RefSeq" id="WP_010880330.1">
    <property type="nucleotide sequence ID" value="NC_000918.1"/>
</dbReference>
<dbReference type="SMR" id="O66832"/>
<dbReference type="FunCoup" id="O66832">
    <property type="interactions" value="356"/>
</dbReference>
<dbReference type="STRING" id="224324.aq_557"/>
<dbReference type="EnsemblBacteria" id="AAC06785">
    <property type="protein sequence ID" value="AAC06785"/>
    <property type="gene ID" value="aq_557"/>
</dbReference>
<dbReference type="KEGG" id="aae:aq_557"/>
<dbReference type="PATRIC" id="fig|224324.8.peg.458"/>
<dbReference type="eggNOG" id="COG0132">
    <property type="taxonomic scope" value="Bacteria"/>
</dbReference>
<dbReference type="HOGENOM" id="CLU_072551_3_1_0"/>
<dbReference type="InParanoid" id="O66832"/>
<dbReference type="OrthoDB" id="9802097at2"/>
<dbReference type="UniPathway" id="UPA00078">
    <property type="reaction ID" value="UER00161"/>
</dbReference>
<dbReference type="Proteomes" id="UP000000798">
    <property type="component" value="Chromosome"/>
</dbReference>
<dbReference type="GO" id="GO:0005829">
    <property type="term" value="C:cytosol"/>
    <property type="evidence" value="ECO:0000318"/>
    <property type="project" value="GO_Central"/>
</dbReference>
<dbReference type="GO" id="GO:0005524">
    <property type="term" value="F:ATP binding"/>
    <property type="evidence" value="ECO:0007669"/>
    <property type="project" value="UniProtKB-UniRule"/>
</dbReference>
<dbReference type="GO" id="GO:0004141">
    <property type="term" value="F:dethiobiotin synthase activity"/>
    <property type="evidence" value="ECO:0000318"/>
    <property type="project" value="GO_Central"/>
</dbReference>
<dbReference type="GO" id="GO:0000287">
    <property type="term" value="F:magnesium ion binding"/>
    <property type="evidence" value="ECO:0007669"/>
    <property type="project" value="UniProtKB-UniRule"/>
</dbReference>
<dbReference type="GO" id="GO:0009102">
    <property type="term" value="P:biotin biosynthetic process"/>
    <property type="evidence" value="ECO:0000318"/>
    <property type="project" value="GO_Central"/>
</dbReference>
<dbReference type="CDD" id="cd03109">
    <property type="entry name" value="DTBS"/>
    <property type="match status" value="1"/>
</dbReference>
<dbReference type="FunFam" id="3.40.50.300:FF:000292">
    <property type="entry name" value="ATP-dependent dethiobiotin synthetase BioD"/>
    <property type="match status" value="1"/>
</dbReference>
<dbReference type="Gene3D" id="3.40.50.300">
    <property type="entry name" value="P-loop containing nucleotide triphosphate hydrolases"/>
    <property type="match status" value="1"/>
</dbReference>
<dbReference type="HAMAP" id="MF_00336">
    <property type="entry name" value="BioD"/>
    <property type="match status" value="1"/>
</dbReference>
<dbReference type="InterPro" id="IPR004472">
    <property type="entry name" value="DTB_synth_BioD"/>
</dbReference>
<dbReference type="InterPro" id="IPR027417">
    <property type="entry name" value="P-loop_NTPase"/>
</dbReference>
<dbReference type="NCBIfam" id="TIGR00347">
    <property type="entry name" value="bioD"/>
    <property type="match status" value="1"/>
</dbReference>
<dbReference type="PANTHER" id="PTHR43210:SF2">
    <property type="entry name" value="ATP-DEPENDENT DETHIOBIOTIN SYNTHETASE BIOD 2"/>
    <property type="match status" value="1"/>
</dbReference>
<dbReference type="PANTHER" id="PTHR43210">
    <property type="entry name" value="DETHIOBIOTIN SYNTHETASE"/>
    <property type="match status" value="1"/>
</dbReference>
<dbReference type="Pfam" id="PF13500">
    <property type="entry name" value="AAA_26"/>
    <property type="match status" value="1"/>
</dbReference>
<dbReference type="PIRSF" id="PIRSF006755">
    <property type="entry name" value="DTB_synth"/>
    <property type="match status" value="1"/>
</dbReference>
<dbReference type="SUPFAM" id="SSF52540">
    <property type="entry name" value="P-loop containing nucleoside triphosphate hydrolases"/>
    <property type="match status" value="1"/>
</dbReference>
<feature type="chain" id="PRO_0000187945" description="ATP-dependent dethiobiotin synthetase BioD">
    <location>
        <begin position="1"/>
        <end position="220"/>
    </location>
</feature>
<feature type="active site" evidence="1">
    <location>
        <position position="36"/>
    </location>
</feature>
<feature type="binding site" evidence="1">
    <location>
        <begin position="11"/>
        <end position="16"/>
    </location>
    <ligand>
        <name>ATP</name>
        <dbReference type="ChEBI" id="CHEBI:30616"/>
    </ligand>
</feature>
<feature type="binding site" evidence="1">
    <location>
        <position position="15"/>
    </location>
    <ligand>
        <name>Mg(2+)</name>
        <dbReference type="ChEBI" id="CHEBI:18420"/>
    </ligand>
</feature>
<feature type="binding site" evidence="1">
    <location>
        <position position="40"/>
    </location>
    <ligand>
        <name>substrate</name>
    </ligand>
</feature>
<feature type="binding site" evidence="1">
    <location>
        <position position="48"/>
    </location>
    <ligand>
        <name>ATP</name>
        <dbReference type="ChEBI" id="CHEBI:30616"/>
    </ligand>
</feature>
<feature type="binding site" evidence="1">
    <location>
        <position position="48"/>
    </location>
    <ligand>
        <name>Mg(2+)</name>
        <dbReference type="ChEBI" id="CHEBI:18420"/>
    </ligand>
</feature>
<feature type="binding site" evidence="1">
    <location>
        <begin position="107"/>
        <end position="110"/>
    </location>
    <ligand>
        <name>ATP</name>
        <dbReference type="ChEBI" id="CHEBI:30616"/>
    </ligand>
</feature>
<feature type="binding site" evidence="1">
    <location>
        <position position="107"/>
    </location>
    <ligand>
        <name>Mg(2+)</name>
        <dbReference type="ChEBI" id="CHEBI:18420"/>
    </ligand>
</feature>
<reference key="1">
    <citation type="journal article" date="1998" name="Nature">
        <title>The complete genome of the hyperthermophilic bacterium Aquifex aeolicus.</title>
        <authorList>
            <person name="Deckert G."/>
            <person name="Warren P.V."/>
            <person name="Gaasterland T."/>
            <person name="Young W.G."/>
            <person name="Lenox A.L."/>
            <person name="Graham D.E."/>
            <person name="Overbeek R."/>
            <person name="Snead M.A."/>
            <person name="Keller M."/>
            <person name="Aujay M."/>
            <person name="Huber R."/>
            <person name="Feldman R.A."/>
            <person name="Short J.M."/>
            <person name="Olsen G.J."/>
            <person name="Swanson R.V."/>
        </authorList>
    </citation>
    <scope>NUCLEOTIDE SEQUENCE [LARGE SCALE GENOMIC DNA]</scope>
    <source>
        <strain>VF5</strain>
    </source>
</reference>
<gene>
    <name evidence="1" type="primary">bioD</name>
    <name type="ordered locus">aq_557</name>
</gene>
<comment type="function">
    <text evidence="1">Catalyzes a mechanistically unusual reaction, the ATP-dependent insertion of CO2 between the N7 and N8 nitrogen atoms of 7,8-diaminopelargonic acid (DAPA, also called 7,8-diammoniononanoate) to form a ureido ring.</text>
</comment>
<comment type="catalytic activity">
    <reaction evidence="1">
        <text>(7R,8S)-7,8-diammoniononanoate + CO2 + ATP = (4R,5S)-dethiobiotin + ADP + phosphate + 3 H(+)</text>
        <dbReference type="Rhea" id="RHEA:15805"/>
        <dbReference type="ChEBI" id="CHEBI:15378"/>
        <dbReference type="ChEBI" id="CHEBI:16526"/>
        <dbReference type="ChEBI" id="CHEBI:30616"/>
        <dbReference type="ChEBI" id="CHEBI:43474"/>
        <dbReference type="ChEBI" id="CHEBI:149469"/>
        <dbReference type="ChEBI" id="CHEBI:149473"/>
        <dbReference type="ChEBI" id="CHEBI:456216"/>
        <dbReference type="EC" id="6.3.3.3"/>
    </reaction>
</comment>
<comment type="cofactor">
    <cofactor evidence="1">
        <name>Mg(2+)</name>
        <dbReference type="ChEBI" id="CHEBI:18420"/>
    </cofactor>
</comment>
<comment type="pathway">
    <text evidence="1">Cofactor biosynthesis; biotin biosynthesis; biotin from 7,8-diaminononanoate: step 1/2.</text>
</comment>
<comment type="subunit">
    <text evidence="1">Homodimer.</text>
</comment>
<comment type="subcellular location">
    <subcellularLocation>
        <location evidence="1">Cytoplasm</location>
    </subcellularLocation>
</comment>
<comment type="similarity">
    <text evidence="1">Belongs to the dethiobiotin synthetase family.</text>
</comment>
<sequence length="220" mass="24503">MRLLITGTDTGVGKTFITYNLAKELKERGYKVGCLKPVETYVREVPEDGSLLSKATGQSVNEIVPVRFSLPLAPYAATLEEGRDFALEELGKHYEELSKKYKFLLVEGAGGIAVPIKKNYTYANLARDWKLKVLIVGRAGLGTINHTFLTWYYAKATGLEVIGIILNGFTGEDVSERTNPQIIEEMTGIKPYKVPRIQDVELPKDIRTGLADYVLSRFTP</sequence>
<organism>
    <name type="scientific">Aquifex aeolicus (strain VF5)</name>
    <dbReference type="NCBI Taxonomy" id="224324"/>
    <lineage>
        <taxon>Bacteria</taxon>
        <taxon>Pseudomonadati</taxon>
        <taxon>Aquificota</taxon>
        <taxon>Aquificia</taxon>
        <taxon>Aquificales</taxon>
        <taxon>Aquificaceae</taxon>
        <taxon>Aquifex</taxon>
    </lineage>
</organism>
<proteinExistence type="inferred from homology"/>
<name>BIOD_AQUAE</name>